<accession>B2U050</accession>
<proteinExistence type="inferred from homology"/>
<gene>
    <name evidence="1" type="primary">csrA</name>
    <name type="ordered locus">SbBS512_E3181</name>
</gene>
<keyword id="KW-0010">Activator</keyword>
<keyword id="KW-0963">Cytoplasm</keyword>
<keyword id="KW-1185">Reference proteome</keyword>
<keyword id="KW-0678">Repressor</keyword>
<keyword id="KW-0694">RNA-binding</keyword>
<keyword id="KW-0810">Translation regulation</keyword>
<dbReference type="EMBL" id="CP001063">
    <property type="protein sequence ID" value="ACD09453.1"/>
    <property type="molecule type" value="Genomic_DNA"/>
</dbReference>
<dbReference type="RefSeq" id="WP_000906486.1">
    <property type="nucleotide sequence ID" value="NC_010658.1"/>
</dbReference>
<dbReference type="SMR" id="B2U050"/>
<dbReference type="STRING" id="344609.SbBS512_E3181"/>
<dbReference type="GeneID" id="98389839"/>
<dbReference type="KEGG" id="sbc:SbBS512_E3181"/>
<dbReference type="HOGENOM" id="CLU_164837_2_1_6"/>
<dbReference type="Proteomes" id="UP000001030">
    <property type="component" value="Chromosome"/>
</dbReference>
<dbReference type="GO" id="GO:0005829">
    <property type="term" value="C:cytosol"/>
    <property type="evidence" value="ECO:0007669"/>
    <property type="project" value="TreeGrafter"/>
</dbReference>
<dbReference type="GO" id="GO:0048027">
    <property type="term" value="F:mRNA 5'-UTR binding"/>
    <property type="evidence" value="ECO:0007669"/>
    <property type="project" value="UniProtKB-UniRule"/>
</dbReference>
<dbReference type="GO" id="GO:0006402">
    <property type="term" value="P:mRNA catabolic process"/>
    <property type="evidence" value="ECO:0007669"/>
    <property type="project" value="InterPro"/>
</dbReference>
<dbReference type="GO" id="GO:0045947">
    <property type="term" value="P:negative regulation of translational initiation"/>
    <property type="evidence" value="ECO:0007669"/>
    <property type="project" value="UniProtKB-UniRule"/>
</dbReference>
<dbReference type="GO" id="GO:0045948">
    <property type="term" value="P:positive regulation of translational initiation"/>
    <property type="evidence" value="ECO:0007669"/>
    <property type="project" value="UniProtKB-UniRule"/>
</dbReference>
<dbReference type="GO" id="GO:0006109">
    <property type="term" value="P:regulation of carbohydrate metabolic process"/>
    <property type="evidence" value="ECO:0007669"/>
    <property type="project" value="UniProtKB-UniRule"/>
</dbReference>
<dbReference type="FunFam" id="2.60.40.4380:FF:000001">
    <property type="entry name" value="Translational regulator CsrA"/>
    <property type="match status" value="1"/>
</dbReference>
<dbReference type="Gene3D" id="2.60.40.4380">
    <property type="entry name" value="Translational regulator CsrA"/>
    <property type="match status" value="1"/>
</dbReference>
<dbReference type="HAMAP" id="MF_00167">
    <property type="entry name" value="CsrA"/>
    <property type="match status" value="1"/>
</dbReference>
<dbReference type="InterPro" id="IPR003751">
    <property type="entry name" value="CsrA"/>
</dbReference>
<dbReference type="InterPro" id="IPR036107">
    <property type="entry name" value="CsrA_sf"/>
</dbReference>
<dbReference type="NCBIfam" id="TIGR00202">
    <property type="entry name" value="csrA"/>
    <property type="match status" value="1"/>
</dbReference>
<dbReference type="NCBIfam" id="NF002469">
    <property type="entry name" value="PRK01712.1"/>
    <property type="match status" value="1"/>
</dbReference>
<dbReference type="PANTHER" id="PTHR34984">
    <property type="entry name" value="CARBON STORAGE REGULATOR"/>
    <property type="match status" value="1"/>
</dbReference>
<dbReference type="PANTHER" id="PTHR34984:SF1">
    <property type="entry name" value="CARBON STORAGE REGULATOR"/>
    <property type="match status" value="1"/>
</dbReference>
<dbReference type="Pfam" id="PF02599">
    <property type="entry name" value="CsrA"/>
    <property type="match status" value="1"/>
</dbReference>
<dbReference type="SUPFAM" id="SSF117130">
    <property type="entry name" value="CsrA-like"/>
    <property type="match status" value="1"/>
</dbReference>
<evidence type="ECO:0000255" key="1">
    <source>
        <dbReference type="HAMAP-Rule" id="MF_00167"/>
    </source>
</evidence>
<comment type="function">
    <text evidence="1">A key translational regulator that binds mRNA to regulate translation initiation and/or mRNA stability. Mediates global changes in gene expression, shifting from rapid growth to stress survival by linking envelope stress, the stringent response and the catabolite repression systems. Usually binds in the 5'-UTR; binding at or near the Shine-Dalgarno sequence prevents ribosome-binding, repressing translation, binding elsewhere in the 5'-UTR can activate translation and/or stabilize the mRNA. Its function is antagonized by small RNA(s).</text>
</comment>
<comment type="subunit">
    <text evidence="1">Homodimer; the beta-strands of each monomer intercalate to form a hydrophobic core, while the alpha-helices form wings that extend away from the core.</text>
</comment>
<comment type="subcellular location">
    <subcellularLocation>
        <location evidence="1">Cytoplasm</location>
    </subcellularLocation>
</comment>
<comment type="similarity">
    <text evidence="1">Belongs to the CsrA/RsmA family.</text>
</comment>
<protein>
    <recommendedName>
        <fullName evidence="1">Translational regulator CsrA</fullName>
    </recommendedName>
    <alternativeName>
        <fullName evidence="1">Carbon storage regulator</fullName>
    </alternativeName>
</protein>
<sequence length="61" mass="6856">MLILTRRVGETLMIGDEVTVTVLGVKGNQVRIGVNAPKEVSVHREEIYQRIQAEKSQQSSY</sequence>
<name>CSRA_SHIB3</name>
<reference key="1">
    <citation type="submission" date="2008-05" db="EMBL/GenBank/DDBJ databases">
        <title>Complete sequence of Shigella boydii serotype 18 strain BS512.</title>
        <authorList>
            <person name="Rasko D.A."/>
            <person name="Rosovitz M."/>
            <person name="Maurelli A.T."/>
            <person name="Myers G."/>
            <person name="Seshadri R."/>
            <person name="Cer R."/>
            <person name="Jiang L."/>
            <person name="Ravel J."/>
            <person name="Sebastian Y."/>
        </authorList>
    </citation>
    <scope>NUCLEOTIDE SEQUENCE [LARGE SCALE GENOMIC DNA]</scope>
    <source>
        <strain>CDC 3083-94 / BS512</strain>
    </source>
</reference>
<feature type="chain" id="PRO_1000097510" description="Translational regulator CsrA">
    <location>
        <begin position="1"/>
        <end position="61"/>
    </location>
</feature>
<organism>
    <name type="scientific">Shigella boydii serotype 18 (strain CDC 3083-94 / BS512)</name>
    <dbReference type="NCBI Taxonomy" id="344609"/>
    <lineage>
        <taxon>Bacteria</taxon>
        <taxon>Pseudomonadati</taxon>
        <taxon>Pseudomonadota</taxon>
        <taxon>Gammaproteobacteria</taxon>
        <taxon>Enterobacterales</taxon>
        <taxon>Enterobacteriaceae</taxon>
        <taxon>Shigella</taxon>
    </lineage>
</organism>